<evidence type="ECO:0000255" key="1">
    <source>
        <dbReference type="HAMAP-Rule" id="MF_01071"/>
    </source>
</evidence>
<organism>
    <name type="scientific">Salmonella paratyphi B (strain ATCC BAA-1250 / SPB7)</name>
    <dbReference type="NCBI Taxonomy" id="1016998"/>
    <lineage>
        <taxon>Bacteria</taxon>
        <taxon>Pseudomonadati</taxon>
        <taxon>Pseudomonadota</taxon>
        <taxon>Gammaproteobacteria</taxon>
        <taxon>Enterobacterales</taxon>
        <taxon>Enterobacteriaceae</taxon>
        <taxon>Salmonella</taxon>
    </lineage>
</organism>
<feature type="chain" id="PRO_1000084498" description="UPF0266 membrane protein YobD">
    <location>
        <begin position="1"/>
        <end position="152"/>
    </location>
</feature>
<feature type="transmembrane region" description="Helical" evidence="1">
    <location>
        <begin position="6"/>
        <end position="26"/>
    </location>
</feature>
<feature type="transmembrane region" description="Helical" evidence="1">
    <location>
        <begin position="45"/>
        <end position="65"/>
    </location>
</feature>
<feature type="transmembrane region" description="Helical" evidence="1">
    <location>
        <begin position="67"/>
        <end position="87"/>
    </location>
</feature>
<sequence>MTITDLVLILFIAALLAYALYDQFIMPRRNGPTLLSIALLHRGRVDSVIFVGLVAILIYNNVTSHGAQMTTWLLSALALMGFYIFWIRTPRIIFKQRGFFFANVWIEYNRIKEMNLSEDGVLVMQLEQRRLLIRVRNIDDLEKIYKLLIENQ</sequence>
<gene>
    <name evidence="1" type="primary">yobD</name>
    <name type="ordered locus">SPAB_01381</name>
</gene>
<proteinExistence type="inferred from homology"/>
<comment type="subcellular location">
    <subcellularLocation>
        <location evidence="1">Cell inner membrane</location>
        <topology evidence="1">Multi-pass membrane protein</topology>
    </subcellularLocation>
</comment>
<comment type="similarity">
    <text evidence="1">Belongs to the UPF0266 family.</text>
</comment>
<reference key="1">
    <citation type="submission" date="2007-11" db="EMBL/GenBank/DDBJ databases">
        <authorList>
            <consortium name="The Salmonella enterica serovar Paratyphi B Genome Sequencing Project"/>
            <person name="McClelland M."/>
            <person name="Sanderson E.K."/>
            <person name="Porwollik S."/>
            <person name="Spieth J."/>
            <person name="Clifton W.S."/>
            <person name="Fulton R."/>
            <person name="Cordes M."/>
            <person name="Wollam A."/>
            <person name="Shah N."/>
            <person name="Pepin K."/>
            <person name="Bhonagiri V."/>
            <person name="Nash W."/>
            <person name="Johnson M."/>
            <person name="Thiruvilangam P."/>
            <person name="Wilson R."/>
        </authorList>
    </citation>
    <scope>NUCLEOTIDE SEQUENCE [LARGE SCALE GENOMIC DNA]</scope>
    <source>
        <strain>ATCC BAA-1250 / SPB7</strain>
    </source>
</reference>
<dbReference type="EMBL" id="CP000886">
    <property type="protein sequence ID" value="ABX66789.1"/>
    <property type="molecule type" value="Genomic_DNA"/>
</dbReference>
<dbReference type="RefSeq" id="WP_000156272.1">
    <property type="nucleotide sequence ID" value="NC_010102.1"/>
</dbReference>
<dbReference type="KEGG" id="spq:SPAB_01381"/>
<dbReference type="PATRIC" id="fig|1016998.12.peg.1302"/>
<dbReference type="HOGENOM" id="CLU_133645_0_0_6"/>
<dbReference type="BioCyc" id="SENT1016998:SPAB_RS05645-MONOMER"/>
<dbReference type="Proteomes" id="UP000008556">
    <property type="component" value="Chromosome"/>
</dbReference>
<dbReference type="GO" id="GO:0005886">
    <property type="term" value="C:plasma membrane"/>
    <property type="evidence" value="ECO:0007669"/>
    <property type="project" value="UniProtKB-SubCell"/>
</dbReference>
<dbReference type="HAMAP" id="MF_01071">
    <property type="entry name" value="UPF0266"/>
    <property type="match status" value="1"/>
</dbReference>
<dbReference type="InterPro" id="IPR009328">
    <property type="entry name" value="DUF986"/>
</dbReference>
<dbReference type="NCBIfam" id="NF002791">
    <property type="entry name" value="PRK02913.1"/>
    <property type="match status" value="1"/>
</dbReference>
<dbReference type="Pfam" id="PF06173">
    <property type="entry name" value="DUF986"/>
    <property type="match status" value="1"/>
</dbReference>
<dbReference type="PIRSF" id="PIRSF020687">
    <property type="entry name" value="UCP020687"/>
    <property type="match status" value="1"/>
</dbReference>
<accession>A9MVT3</accession>
<name>YOBD_SALPB</name>
<protein>
    <recommendedName>
        <fullName evidence="1">UPF0266 membrane protein YobD</fullName>
    </recommendedName>
</protein>
<keyword id="KW-0997">Cell inner membrane</keyword>
<keyword id="KW-1003">Cell membrane</keyword>
<keyword id="KW-0472">Membrane</keyword>
<keyword id="KW-0812">Transmembrane</keyword>
<keyword id="KW-1133">Transmembrane helix</keyword>